<sequence length="222" mass="25259">MVKYLVAQGVNVDAQNSRALCLACKYGYINIAYFLMHEGANIYANDNHPIRLAAEYGHLSIVKLLIYHNANIRAVEDSALRMAAKRNKLEVVKYIIEKIGTNYEYSDYPLAYAAGKGHIEMIEYLLSIGEKITDYAMFMAINNGHVGTVKYLIDESQSLPCISYSELAKITRKGHLEMIKLLNNRGIKINKIVNTTIINETIEKERWEILEYFNKIGVNNNC</sequence>
<name>YL036_MIMIV</name>
<keyword id="KW-0040">ANK repeat</keyword>
<keyword id="KW-1185">Reference proteome</keyword>
<keyword id="KW-0677">Repeat</keyword>
<dbReference type="EMBL" id="AY653733">
    <property type="protein sequence ID" value="AAV50311.1"/>
    <property type="molecule type" value="Genomic_DNA"/>
</dbReference>
<dbReference type="SMR" id="Q5UPB4"/>
<dbReference type="KEGG" id="vg:9924617"/>
<dbReference type="OrthoDB" id="8173at10239"/>
<dbReference type="Proteomes" id="UP000001134">
    <property type="component" value="Genome"/>
</dbReference>
<dbReference type="GO" id="GO:0045087">
    <property type="term" value="P:innate immune response"/>
    <property type="evidence" value="ECO:0007669"/>
    <property type="project" value="TreeGrafter"/>
</dbReference>
<dbReference type="Gene3D" id="1.25.40.20">
    <property type="entry name" value="Ankyrin repeat-containing domain"/>
    <property type="match status" value="2"/>
</dbReference>
<dbReference type="InterPro" id="IPR051631">
    <property type="entry name" value="Ankyrin-KH/SAM_domain"/>
</dbReference>
<dbReference type="InterPro" id="IPR002110">
    <property type="entry name" value="Ankyrin_rpt"/>
</dbReference>
<dbReference type="InterPro" id="IPR036770">
    <property type="entry name" value="Ankyrin_rpt-contain_sf"/>
</dbReference>
<dbReference type="PANTHER" id="PTHR23206">
    <property type="entry name" value="MASK PROTEIN"/>
    <property type="match status" value="1"/>
</dbReference>
<dbReference type="PANTHER" id="PTHR23206:SF7">
    <property type="entry name" value="PROTEIN KINASE DOMAIN-CONTAINING PROTEIN"/>
    <property type="match status" value="1"/>
</dbReference>
<dbReference type="Pfam" id="PF00023">
    <property type="entry name" value="Ank"/>
    <property type="match status" value="1"/>
</dbReference>
<dbReference type="Pfam" id="PF12796">
    <property type="entry name" value="Ank_2"/>
    <property type="match status" value="1"/>
</dbReference>
<dbReference type="SMART" id="SM00248">
    <property type="entry name" value="ANK"/>
    <property type="match status" value="6"/>
</dbReference>
<dbReference type="SUPFAM" id="SSF48403">
    <property type="entry name" value="Ankyrin repeat"/>
    <property type="match status" value="1"/>
</dbReference>
<dbReference type="PROSITE" id="PS50297">
    <property type="entry name" value="ANK_REP_REGION"/>
    <property type="match status" value="1"/>
</dbReference>
<dbReference type="PROSITE" id="PS50088">
    <property type="entry name" value="ANK_REPEAT"/>
    <property type="match status" value="2"/>
</dbReference>
<feature type="chain" id="PRO_0000067137" description="Putative ankyrin repeat protein L36">
    <location>
        <begin position="1"/>
        <end position="222"/>
    </location>
</feature>
<feature type="repeat" description="ANK 1">
    <location>
        <begin position="1"/>
        <end position="14"/>
    </location>
</feature>
<feature type="repeat" description="ANK 2">
    <location>
        <begin position="15"/>
        <end position="44"/>
    </location>
</feature>
<feature type="repeat" description="ANK 3">
    <location>
        <begin position="45"/>
        <end position="74"/>
    </location>
</feature>
<feature type="repeat" description="ANK 4">
    <location>
        <begin position="76"/>
        <end position="104"/>
    </location>
</feature>
<feature type="repeat" description="ANK 5">
    <location>
        <begin position="105"/>
        <end position="134"/>
    </location>
</feature>
<feature type="repeat" description="ANK 6">
    <location>
        <begin position="136"/>
        <end position="161"/>
    </location>
</feature>
<feature type="repeat" description="ANK 7">
    <location>
        <begin position="163"/>
        <end position="191"/>
    </location>
</feature>
<organismHost>
    <name type="scientific">Acanthamoeba polyphaga</name>
    <name type="common">Amoeba</name>
    <dbReference type="NCBI Taxonomy" id="5757"/>
</organismHost>
<gene>
    <name type="ordered locus">MIMI_L36</name>
</gene>
<reference key="1">
    <citation type="journal article" date="2004" name="Science">
        <title>The 1.2-megabase genome sequence of Mimivirus.</title>
        <authorList>
            <person name="Raoult D."/>
            <person name="Audic S."/>
            <person name="Robert C."/>
            <person name="Abergel C."/>
            <person name="Renesto P."/>
            <person name="Ogata H."/>
            <person name="La Scola B."/>
            <person name="Susan M."/>
            <person name="Claverie J.-M."/>
        </authorList>
    </citation>
    <scope>NUCLEOTIDE SEQUENCE [LARGE SCALE GENOMIC DNA]</scope>
    <source>
        <strain>Rowbotham-Bradford</strain>
    </source>
</reference>
<organism>
    <name type="scientific">Acanthamoeba polyphaga mimivirus</name>
    <name type="common">APMV</name>
    <dbReference type="NCBI Taxonomy" id="212035"/>
    <lineage>
        <taxon>Viruses</taxon>
        <taxon>Varidnaviria</taxon>
        <taxon>Bamfordvirae</taxon>
        <taxon>Nucleocytoviricota</taxon>
        <taxon>Megaviricetes</taxon>
        <taxon>Imitervirales</taxon>
        <taxon>Mimiviridae</taxon>
        <taxon>Megamimivirinae</taxon>
        <taxon>Mimivirus</taxon>
        <taxon>Mimivirus bradfordmassiliense</taxon>
    </lineage>
</organism>
<accession>Q5UPB4</accession>
<protein>
    <recommendedName>
        <fullName>Putative ankyrin repeat protein L36</fullName>
    </recommendedName>
</protein>
<proteinExistence type="predicted"/>